<feature type="chain" id="PRO_0000180793" description="Flagellar basal body rod protein FlgB">
    <location>
        <begin position="1"/>
        <end position="138"/>
    </location>
</feature>
<keyword id="KW-0975">Bacterial flagellum</keyword>
<keyword id="KW-1185">Reference proteome</keyword>
<dbReference type="EMBL" id="AE005674">
    <property type="protein sequence ID" value="AAN42701.1"/>
    <property type="molecule type" value="Genomic_DNA"/>
</dbReference>
<dbReference type="EMBL" id="AE014073">
    <property type="protein sequence ID" value="AAP16588.1"/>
    <property type="molecule type" value="Genomic_DNA"/>
</dbReference>
<dbReference type="RefSeq" id="NP_706994.1">
    <property type="nucleotide sequence ID" value="NC_004337.2"/>
</dbReference>
<dbReference type="RefSeq" id="WP_000884702.1">
    <property type="nucleotide sequence ID" value="NZ_WPGW01000001.1"/>
</dbReference>
<dbReference type="SMR" id="P0ABX1"/>
<dbReference type="STRING" id="198214.SF1079"/>
<dbReference type="PaxDb" id="198214-SF1079"/>
<dbReference type="GeneID" id="1024053"/>
<dbReference type="GeneID" id="93776334"/>
<dbReference type="KEGG" id="sfl:SF1079"/>
<dbReference type="KEGG" id="sfx:S1157"/>
<dbReference type="PATRIC" id="fig|198214.7.peg.1263"/>
<dbReference type="HOGENOM" id="CLU_125463_1_0_6"/>
<dbReference type="Proteomes" id="UP000001006">
    <property type="component" value="Chromosome"/>
</dbReference>
<dbReference type="Proteomes" id="UP000002673">
    <property type="component" value="Chromosome"/>
</dbReference>
<dbReference type="GO" id="GO:0030694">
    <property type="term" value="C:bacterial-type flagellum basal body, rod"/>
    <property type="evidence" value="ECO:0007669"/>
    <property type="project" value="InterPro"/>
</dbReference>
<dbReference type="GO" id="GO:0071973">
    <property type="term" value="P:bacterial-type flagellum-dependent cell motility"/>
    <property type="evidence" value="ECO:0007669"/>
    <property type="project" value="InterPro"/>
</dbReference>
<dbReference type="InterPro" id="IPR001444">
    <property type="entry name" value="Flag_bb_rod_N"/>
</dbReference>
<dbReference type="InterPro" id="IPR019776">
    <property type="entry name" value="Flagellar_basal_body_rod_CS"/>
</dbReference>
<dbReference type="InterPro" id="IPR006300">
    <property type="entry name" value="FlgB"/>
</dbReference>
<dbReference type="NCBIfam" id="TIGR01396">
    <property type="entry name" value="FlgB"/>
    <property type="match status" value="1"/>
</dbReference>
<dbReference type="PANTHER" id="PTHR30435:SF12">
    <property type="entry name" value="FLAGELLAR BASAL BODY ROD PROTEIN FLGB"/>
    <property type="match status" value="1"/>
</dbReference>
<dbReference type="PANTHER" id="PTHR30435">
    <property type="entry name" value="FLAGELLAR PROTEIN"/>
    <property type="match status" value="1"/>
</dbReference>
<dbReference type="Pfam" id="PF00460">
    <property type="entry name" value="Flg_bb_rod"/>
    <property type="match status" value="1"/>
</dbReference>
<dbReference type="PIRSF" id="PIRSF002889">
    <property type="entry name" value="Rod_FlgB"/>
    <property type="match status" value="1"/>
</dbReference>
<dbReference type="PROSITE" id="PS00588">
    <property type="entry name" value="FLAGELLA_BB_ROD"/>
    <property type="match status" value="1"/>
</dbReference>
<name>FLGB_SHIFL</name>
<organism>
    <name type="scientific">Shigella flexneri</name>
    <dbReference type="NCBI Taxonomy" id="623"/>
    <lineage>
        <taxon>Bacteria</taxon>
        <taxon>Pseudomonadati</taxon>
        <taxon>Pseudomonadota</taxon>
        <taxon>Gammaproteobacteria</taxon>
        <taxon>Enterobacterales</taxon>
        <taxon>Enterobacteriaceae</taxon>
        <taxon>Shigella</taxon>
    </lineage>
</organism>
<protein>
    <recommendedName>
        <fullName>Flagellar basal body rod protein FlgB</fullName>
    </recommendedName>
    <alternativeName>
        <fullName>Putative proximal rod protein</fullName>
    </alternativeName>
</protein>
<accession>P0ABX1</accession>
<accession>P75934</accession>
<sequence>MLDKLDAALRFQQEALNLRAQRQEVLAANIANADTPGYQARDIDFASELKKVMQRGRDATSVVALTMTSTQHIPAQALTPPTAELQYRIPDQPSLDGNTVDMDRERTQFADNSLQYQMSLSALSGQIKGMMNVLQSGN</sequence>
<proteinExistence type="inferred from homology"/>
<gene>
    <name type="primary">flgB</name>
    <name type="ordered locus">SF1079</name>
    <name type="ordered locus">S1157</name>
</gene>
<reference key="1">
    <citation type="journal article" date="2002" name="Nucleic Acids Res.">
        <title>Genome sequence of Shigella flexneri 2a: insights into pathogenicity through comparison with genomes of Escherichia coli K12 and O157.</title>
        <authorList>
            <person name="Jin Q."/>
            <person name="Yuan Z."/>
            <person name="Xu J."/>
            <person name="Wang Y."/>
            <person name="Shen Y."/>
            <person name="Lu W."/>
            <person name="Wang J."/>
            <person name="Liu H."/>
            <person name="Yang J."/>
            <person name="Yang F."/>
            <person name="Zhang X."/>
            <person name="Zhang J."/>
            <person name="Yang G."/>
            <person name="Wu H."/>
            <person name="Qu D."/>
            <person name="Dong J."/>
            <person name="Sun L."/>
            <person name="Xue Y."/>
            <person name="Zhao A."/>
            <person name="Gao Y."/>
            <person name="Zhu J."/>
            <person name="Kan B."/>
            <person name="Ding K."/>
            <person name="Chen S."/>
            <person name="Cheng H."/>
            <person name="Yao Z."/>
            <person name="He B."/>
            <person name="Chen R."/>
            <person name="Ma D."/>
            <person name="Qiang B."/>
            <person name="Wen Y."/>
            <person name="Hou Y."/>
            <person name="Yu J."/>
        </authorList>
    </citation>
    <scope>NUCLEOTIDE SEQUENCE [LARGE SCALE GENOMIC DNA]</scope>
    <source>
        <strain>301 / Serotype 2a</strain>
    </source>
</reference>
<reference key="2">
    <citation type="journal article" date="2003" name="Infect. Immun.">
        <title>Complete genome sequence and comparative genomics of Shigella flexneri serotype 2a strain 2457T.</title>
        <authorList>
            <person name="Wei J."/>
            <person name="Goldberg M.B."/>
            <person name="Burland V."/>
            <person name="Venkatesan M.M."/>
            <person name="Deng W."/>
            <person name="Fournier G."/>
            <person name="Mayhew G.F."/>
            <person name="Plunkett G. III"/>
            <person name="Rose D.J."/>
            <person name="Darling A."/>
            <person name="Mau B."/>
            <person name="Perna N.T."/>
            <person name="Payne S.M."/>
            <person name="Runyen-Janecky L.J."/>
            <person name="Zhou S."/>
            <person name="Schwartz D.C."/>
            <person name="Blattner F.R."/>
        </authorList>
    </citation>
    <scope>NUCLEOTIDE SEQUENCE [LARGE SCALE GENOMIC DNA]</scope>
    <source>
        <strain>ATCC 700930 / 2457T / Serotype 2a</strain>
    </source>
</reference>
<comment type="function">
    <text evidence="1">Structural component of flagellum, the bacterial motility apparatus. Part of the rod structure of flagellar basal body (By similarity).</text>
</comment>
<comment type="subunit">
    <text evidence="1">The basal body constitutes a major portion of the flagellar organelle and consists of a number of rings mounted on a central rod. In Gram-negative bacteria, at least four rings, L, P, S and M are present, whereas Gram-positive bacteria lack the L and P rings. The rod consists of about 26 subunits of FlgG in the distal portion, and FlgB, FlgC and FlgF build up the proximal portion of the rod with about 6 subunits each. Rod assembly occurs by export via the flagellum-specific pathway of its constituent proteins and by their incorporation into the rod structure in the probable order of FlgB, FlgC, FlgF and FlgG. Another protein, FliE, also assembles onto the stable rod structure (By similarity).</text>
</comment>
<comment type="subcellular location">
    <subcellularLocation>
        <location evidence="1">Bacterial flagellum basal body</location>
    </subcellularLocation>
</comment>
<comment type="similarity">
    <text evidence="2">Belongs to the flagella basal body rod proteins family.</text>
</comment>
<evidence type="ECO:0000250" key="1"/>
<evidence type="ECO:0000305" key="2"/>